<gene>
    <name type="primary">bglH</name>
    <name type="synonym">yieC</name>
    <name type="ordered locus">b3720</name>
    <name type="ordered locus">JW3698</name>
</gene>
<sequence length="538" mass="60657">MFRRNLITSAILLMAPLAFSAQSLAESLTVEQRLELLEKALRETQSELKKYKDEEKKKYTPATVNRSVSTNDQGYAANPFPTSSAAKPDAVLVKNEEKNASETGSIYSSMTLKDFSKFVKDEIGFSYNGYYRSGWGTASHGSPKSWAIGSLGRFGNEYSGWFDLQLKQRVYNENGKRVDAVVMMDGNVGQQYSTGWFGDNAGGENYMQFSDMYVTTKGFLPFAPEADFWVGKHGAPKIEIQMLDWKTQRTDAAAGVGLENWKVGPGKIDIALVREDVDDYDRSLQNKQQINTNTIDLRYKDIPLWDKATLMVSGRYVTANESASEKDNQDNNGYYDWKDTWMFGTSLTQKFDKGGFNEFSFLVANNSIASNFGRYAGASPFTTFNGRYYGDHTGGTAVRLTSQGEAYIGDHFIVANAIVYSFGNDIYSYETGAHSDFESIRAVVRPAYIWDQYNQTGVELGYFTQQNKDANSNKFNESGYKTTLFHTFKVNTSMLTSRPEIRFYATYIKALENELDGFTFEDNKDDQFAVGAQAEIWW</sequence>
<reference key="1">
    <citation type="journal article" date="1993" name="Genomics">
        <title>DNA sequence and analysis of 136 kilobases of the Escherichia coli genome: organizational symmetry around the origin of replication.</title>
        <authorList>
            <person name="Burland V.D."/>
            <person name="Plunkett G. III"/>
            <person name="Daniels D.L."/>
            <person name="Blattner F.R."/>
        </authorList>
    </citation>
    <scope>NUCLEOTIDE SEQUENCE [LARGE SCALE GENOMIC DNA]</scope>
    <source>
        <strain>K12 / MG1655 / ATCC 47076</strain>
    </source>
</reference>
<reference key="2">
    <citation type="journal article" date="1997" name="Science">
        <title>The complete genome sequence of Escherichia coli K-12.</title>
        <authorList>
            <person name="Blattner F.R."/>
            <person name="Plunkett G. III"/>
            <person name="Bloch C.A."/>
            <person name="Perna N.T."/>
            <person name="Burland V."/>
            <person name="Riley M."/>
            <person name="Collado-Vides J."/>
            <person name="Glasner J.D."/>
            <person name="Rode C.K."/>
            <person name="Mayhew G.F."/>
            <person name="Gregor J."/>
            <person name="Davis N.W."/>
            <person name="Kirkpatrick H.A."/>
            <person name="Goeden M.A."/>
            <person name="Rose D.J."/>
            <person name="Mau B."/>
            <person name="Shao Y."/>
        </authorList>
    </citation>
    <scope>NUCLEOTIDE SEQUENCE [LARGE SCALE GENOMIC DNA]</scope>
    <scope>SEQUENCE REVISION TO 202-251</scope>
    <source>
        <strain>K12 / MG1655 / ATCC 47076</strain>
    </source>
</reference>
<reference key="3">
    <citation type="journal article" date="2006" name="Mol. Syst. Biol.">
        <title>Highly accurate genome sequences of Escherichia coli K-12 strains MG1655 and W3110.</title>
        <authorList>
            <person name="Hayashi K."/>
            <person name="Morooka N."/>
            <person name="Yamamoto Y."/>
            <person name="Fujita K."/>
            <person name="Isono K."/>
            <person name="Choi S."/>
            <person name="Ohtsubo E."/>
            <person name="Baba T."/>
            <person name="Wanner B.L."/>
            <person name="Mori H."/>
            <person name="Horiuchi T."/>
        </authorList>
    </citation>
    <scope>NUCLEOTIDE SEQUENCE [LARGE SCALE GENOMIC DNA]</scope>
    <source>
        <strain>K12 / W3110 / ATCC 27325 / DSM 5911</strain>
    </source>
</reference>
<reference key="4">
    <citation type="journal article" date="1987" name="J. Bacteriol.">
        <title>Beta-glucoside (bgl) operon of Escherichia coli K-12: nucleotide sequence, genetic organization, and possible evolutionary relationship to regulatory components of two Bacillus subtilis genes.</title>
        <authorList>
            <person name="Schnetz K."/>
            <person name="Toloczyki C."/>
            <person name="Rak B."/>
        </authorList>
    </citation>
    <scope>NUCLEOTIDE SEQUENCE [GENOMIC DNA] OF 1-113</scope>
    <source>
        <strain>K12</strain>
    </source>
</reference>
<reference key="5">
    <citation type="journal article" date="1997" name="Mol. Microbiol.">
        <title>Identification of a cryptic porin gene in the Escherichia coli genome: expression and insertion of a monomeric form of the protein into the outer membrane.</title>
        <authorList>
            <person name="Wang J."/>
            <person name="Betton J.-M."/>
            <person name="Michel V."/>
            <person name="Hofnung M."/>
            <person name="Charbit A."/>
        </authorList>
    </citation>
    <scope>OVEREXPRESSION OF 125-538</scope>
    <source>
        <strain>K12</strain>
    </source>
</reference>
<reference key="6">
    <citation type="journal article" date="1999" name="Mol. Microbiol.">
        <title>The gene bglH present in the bgl operon of Escherichia coli, responsible for uptake and fermentation of beta-glucosides encodes for a carbohydrate-specific outer membrane porin.</title>
        <authorList>
            <person name="Andersen C."/>
            <person name="Rak B."/>
            <person name="Benz R."/>
        </authorList>
    </citation>
    <scope>OVEREXPRESSION</scope>
    <scope>CHARACTERIZATION</scope>
    <scope>SUBCELLULAR LOCATION</scope>
    <scope>SUBSTRATE SPECIFICITY</scope>
    <source>
        <strain>K12 / W3110 / ATCC 27325 / DSM 5911</strain>
    </source>
</reference>
<dbReference type="EMBL" id="L10328">
    <property type="protein sequence ID" value="AAA62071.1"/>
    <property type="molecule type" value="Genomic_DNA"/>
</dbReference>
<dbReference type="EMBL" id="U00096">
    <property type="protein sequence ID" value="AAC76743.1"/>
    <property type="molecule type" value="Genomic_DNA"/>
</dbReference>
<dbReference type="EMBL" id="AP009048">
    <property type="protein sequence ID" value="BAE77568.1"/>
    <property type="molecule type" value="Genomic_DNA"/>
</dbReference>
<dbReference type="EMBL" id="M16487">
    <property type="status" value="NOT_ANNOTATED_CDS"/>
    <property type="molecule type" value="Genomic_DNA"/>
</dbReference>
<dbReference type="PIR" id="A65175">
    <property type="entry name" value="A65175"/>
</dbReference>
<dbReference type="RefSeq" id="NP_418176.1">
    <property type="nucleotide sequence ID" value="NC_000913.3"/>
</dbReference>
<dbReference type="RefSeq" id="WP_000489881.1">
    <property type="nucleotide sequence ID" value="NZ_LN832404.1"/>
</dbReference>
<dbReference type="SMR" id="P26218"/>
<dbReference type="BioGRID" id="4261194">
    <property type="interactions" value="167"/>
</dbReference>
<dbReference type="FunCoup" id="P26218">
    <property type="interactions" value="376"/>
</dbReference>
<dbReference type="STRING" id="511145.b3720"/>
<dbReference type="TCDB" id="1.B.3.1.3">
    <property type="family name" value="the sugar porin (sp) family"/>
</dbReference>
<dbReference type="PaxDb" id="511145-b3720"/>
<dbReference type="EnsemblBacteria" id="AAC76743">
    <property type="protein sequence ID" value="AAC76743"/>
    <property type="gene ID" value="b3720"/>
</dbReference>
<dbReference type="GeneID" id="948228"/>
<dbReference type="KEGG" id="ecj:JW3698"/>
<dbReference type="KEGG" id="eco:b3720"/>
<dbReference type="KEGG" id="ecoc:C3026_20165"/>
<dbReference type="PATRIC" id="fig|1411691.4.peg.2981"/>
<dbReference type="EchoBASE" id="EB1339"/>
<dbReference type="eggNOG" id="COG4580">
    <property type="taxonomic scope" value="Bacteria"/>
</dbReference>
<dbReference type="HOGENOM" id="CLU_032473_2_1_6"/>
<dbReference type="InParanoid" id="P26218"/>
<dbReference type="OMA" id="KQQINTH"/>
<dbReference type="OrthoDB" id="106611at2"/>
<dbReference type="PhylomeDB" id="P26218"/>
<dbReference type="BioCyc" id="EcoCyc:EG11364-MONOMER"/>
<dbReference type="PRO" id="PR:P26218"/>
<dbReference type="Proteomes" id="UP000000625">
    <property type="component" value="Chromosome"/>
</dbReference>
<dbReference type="GO" id="GO:0009279">
    <property type="term" value="C:cell outer membrane"/>
    <property type="evidence" value="ECO:0000314"/>
    <property type="project" value="EcoCyc"/>
</dbReference>
<dbReference type="GO" id="GO:0046930">
    <property type="term" value="C:pore complex"/>
    <property type="evidence" value="ECO:0007669"/>
    <property type="project" value="UniProtKB-KW"/>
</dbReference>
<dbReference type="GO" id="GO:0015144">
    <property type="term" value="F:carbohydrate transmembrane transporter activity"/>
    <property type="evidence" value="ECO:0000314"/>
    <property type="project" value="EcoCyc"/>
</dbReference>
<dbReference type="GO" id="GO:0015288">
    <property type="term" value="F:porin activity"/>
    <property type="evidence" value="ECO:0000318"/>
    <property type="project" value="GO_Central"/>
</dbReference>
<dbReference type="GO" id="GO:0034219">
    <property type="term" value="P:carbohydrate transmembrane transport"/>
    <property type="evidence" value="ECO:0000314"/>
    <property type="project" value="EcoCyc"/>
</dbReference>
<dbReference type="GO" id="GO:0006811">
    <property type="term" value="P:monoatomic ion transport"/>
    <property type="evidence" value="ECO:0007669"/>
    <property type="project" value="UniProtKB-KW"/>
</dbReference>
<dbReference type="GO" id="GO:0015774">
    <property type="term" value="P:polysaccharide transport"/>
    <property type="evidence" value="ECO:0000318"/>
    <property type="project" value="GO_Central"/>
</dbReference>
<dbReference type="CDD" id="cd01346">
    <property type="entry name" value="Maltoporin-like"/>
    <property type="match status" value="1"/>
</dbReference>
<dbReference type="FunFam" id="2.40.170.10:FF:000002">
    <property type="entry name" value="Cryptic outer membrane porin BglH"/>
    <property type="match status" value="1"/>
</dbReference>
<dbReference type="Gene3D" id="2.40.170.10">
    <property type="entry name" value="Porin, LamB type"/>
    <property type="match status" value="1"/>
</dbReference>
<dbReference type="InterPro" id="IPR050286">
    <property type="entry name" value="G_neg_Bact_CarbUptk_Porin"/>
</dbReference>
<dbReference type="InterPro" id="IPR021570">
    <property type="entry name" value="LamB-type_porin_N_dom"/>
</dbReference>
<dbReference type="InterPro" id="IPR003192">
    <property type="entry name" value="Porin_LamB"/>
</dbReference>
<dbReference type="InterPro" id="IPR036998">
    <property type="entry name" value="Porin_LamB_sf"/>
</dbReference>
<dbReference type="PANTHER" id="PTHR38762">
    <property type="entry name" value="CRYPTIC OUTER MEMBRANE PORIN BGLH-RELATED"/>
    <property type="match status" value="1"/>
</dbReference>
<dbReference type="PANTHER" id="PTHR38762:SF1">
    <property type="entry name" value="CRYPTIC OUTER MEMBRANE PORIN BGLH-RELATED"/>
    <property type="match status" value="1"/>
</dbReference>
<dbReference type="Pfam" id="PF02264">
    <property type="entry name" value="LamB"/>
    <property type="match status" value="1"/>
</dbReference>
<dbReference type="Pfam" id="PF11471">
    <property type="entry name" value="Sugarporin_N"/>
    <property type="match status" value="1"/>
</dbReference>
<dbReference type="SUPFAM" id="SSF56935">
    <property type="entry name" value="Porins"/>
    <property type="match status" value="1"/>
</dbReference>
<proteinExistence type="evidence at protein level"/>
<feature type="signal peptide" evidence="1">
    <location>
        <begin position="1"/>
        <end position="25"/>
    </location>
</feature>
<feature type="chain" id="PRO_0000025188" description="Cryptic outer membrane porin BglH">
    <location>
        <begin position="26"/>
        <end position="538"/>
    </location>
</feature>
<feature type="region of interest" description="Disordered" evidence="2">
    <location>
        <begin position="52"/>
        <end position="82"/>
    </location>
</feature>
<feature type="compositionally biased region" description="Polar residues" evidence="2">
    <location>
        <begin position="62"/>
        <end position="73"/>
    </location>
</feature>
<feature type="sequence conflict" description="In Ref. 1; AAA62071." evidence="5" ref="1">
    <original>GGENYMQFSDMYVTTKGFLPFAPEADFWVGKHGAPKIEIQMLDWKTQRTD</original>
    <variation>VARTICSSPICTLPPKVSCPLAQRLISGWVNTVRRKLKSRCLTGKRSVLM</variation>
    <location>
        <begin position="202"/>
        <end position="251"/>
    </location>
</feature>
<keyword id="KW-0998">Cell outer membrane</keyword>
<keyword id="KW-0406">Ion transport</keyword>
<keyword id="KW-0472">Membrane</keyword>
<keyword id="KW-0626">Porin</keyword>
<keyword id="KW-1185">Reference proteome</keyword>
<keyword id="KW-0732">Signal</keyword>
<keyword id="KW-0812">Transmembrane</keyword>
<keyword id="KW-1134">Transmembrane beta strand</keyword>
<keyword id="KW-0813">Transport</keyword>
<protein>
    <recommendedName>
        <fullName>Cryptic outer membrane porin BglH</fullName>
    </recommendedName>
</protein>
<name>BGLH_ECOLI</name>
<organism>
    <name type="scientific">Escherichia coli (strain K12)</name>
    <dbReference type="NCBI Taxonomy" id="83333"/>
    <lineage>
        <taxon>Bacteria</taxon>
        <taxon>Pseudomonadati</taxon>
        <taxon>Pseudomonadota</taxon>
        <taxon>Gammaproteobacteria</taxon>
        <taxon>Enterobacterales</taxon>
        <taxon>Enterobacteriaceae</taxon>
        <taxon>Escherichia</taxon>
    </lineage>
</organism>
<evidence type="ECO:0000255" key="1"/>
<evidence type="ECO:0000256" key="2">
    <source>
        <dbReference type="SAM" id="MobiDB-lite"/>
    </source>
</evidence>
<evidence type="ECO:0000269" key="3">
    <source>
    </source>
</evidence>
<evidence type="ECO:0000269" key="4">
    <source>
    </source>
</evidence>
<evidence type="ECO:0000305" key="5"/>
<evidence type="ECO:0000305" key="6">
    <source>
    </source>
</evidence>
<comment type="function">
    <text>Part of a cryptic operon that is poorly expressed in vivo. May be an ancestral sugar porin with a broad carbohydrate specificity; it binds aromatic beta-D-glucosides such as arbutin and salicin, but with low affinity compared to the binding of maltooligosaccharides to the LamB porin.</text>
</comment>
<comment type="subunit">
    <text evidence="3 4">Homomonomer; no physical evidence of a homotrimer has been found (PubMed:9426150, PubMed:10027967), however conductance experiments (PubMed:10027967) suggest it may be a homotrimer. The monomer probably consists of 18 antiparallel beta-strands.</text>
</comment>
<comment type="subcellular location">
    <subcellularLocation>
        <location evidence="6">Cell outer membrane</location>
        <topology evidence="6">Multi-pass membrane protein</topology>
    </subcellularLocation>
    <text>Can be easily removed from the outer membrane by treatment with detergent.</text>
</comment>
<comment type="similarity">
    <text evidence="5">Belongs to the porin LamB (TC 1.B.3) family.</text>
</comment>
<accession>P26218</accession>
<accession>P76743</accession>
<accession>Q2M838</accession>